<keyword id="KW-0963">Cytoplasm</keyword>
<keyword id="KW-0238">DNA-binding</keyword>
<keyword id="KW-0597">Phosphoprotein</keyword>
<keyword id="KW-1185">Reference proteome</keyword>
<keyword id="KW-0804">Transcription</keyword>
<keyword id="KW-0805">Transcription regulation</keyword>
<keyword id="KW-0902">Two-component regulatory system</keyword>
<gene>
    <name type="primary">lytR</name>
    <name type="ordered locus">SSP0463</name>
</gene>
<proteinExistence type="inferred from homology"/>
<organism>
    <name type="scientific">Staphylococcus saprophyticus subsp. saprophyticus (strain ATCC 15305 / DSM 20229 / NCIMB 8711 / NCTC 7292 / S-41)</name>
    <dbReference type="NCBI Taxonomy" id="342451"/>
    <lineage>
        <taxon>Bacteria</taxon>
        <taxon>Bacillati</taxon>
        <taxon>Bacillota</taxon>
        <taxon>Bacilli</taxon>
        <taxon>Bacillales</taxon>
        <taxon>Staphylococcaceae</taxon>
        <taxon>Staphylococcus</taxon>
    </lineage>
</organism>
<dbReference type="EMBL" id="AP008934">
    <property type="protein sequence ID" value="BAE17608.1"/>
    <property type="molecule type" value="Genomic_DNA"/>
</dbReference>
<dbReference type="RefSeq" id="WP_011302422.1">
    <property type="nucleotide sequence ID" value="NZ_MTGA01000036.1"/>
</dbReference>
<dbReference type="SMR" id="Q4A010"/>
<dbReference type="GeneID" id="3616211"/>
<dbReference type="KEGG" id="ssp:SSP0463"/>
<dbReference type="PATRIC" id="fig|342451.11.peg.468"/>
<dbReference type="eggNOG" id="COG3279">
    <property type="taxonomic scope" value="Bacteria"/>
</dbReference>
<dbReference type="HOGENOM" id="CLU_000445_14_1_9"/>
<dbReference type="OrthoDB" id="9809318at2"/>
<dbReference type="Proteomes" id="UP000006371">
    <property type="component" value="Chromosome"/>
</dbReference>
<dbReference type="GO" id="GO:0005737">
    <property type="term" value="C:cytoplasm"/>
    <property type="evidence" value="ECO:0007669"/>
    <property type="project" value="UniProtKB-SubCell"/>
</dbReference>
<dbReference type="GO" id="GO:0003677">
    <property type="term" value="F:DNA binding"/>
    <property type="evidence" value="ECO:0007669"/>
    <property type="project" value="UniProtKB-KW"/>
</dbReference>
<dbReference type="GO" id="GO:0000156">
    <property type="term" value="F:phosphorelay response regulator activity"/>
    <property type="evidence" value="ECO:0007669"/>
    <property type="project" value="InterPro"/>
</dbReference>
<dbReference type="CDD" id="cd17532">
    <property type="entry name" value="REC_LytTR_AlgR-like"/>
    <property type="match status" value="1"/>
</dbReference>
<dbReference type="Gene3D" id="2.20.25.10">
    <property type="match status" value="1"/>
</dbReference>
<dbReference type="Gene3D" id="2.40.50.40">
    <property type="match status" value="1"/>
</dbReference>
<dbReference type="Gene3D" id="3.40.50.2300">
    <property type="match status" value="1"/>
</dbReference>
<dbReference type="InterPro" id="IPR011006">
    <property type="entry name" value="CheY-like_superfamily"/>
</dbReference>
<dbReference type="InterPro" id="IPR046947">
    <property type="entry name" value="LytR-like"/>
</dbReference>
<dbReference type="InterPro" id="IPR007492">
    <property type="entry name" value="LytTR_DNA-bd_dom"/>
</dbReference>
<dbReference type="InterPro" id="IPR001789">
    <property type="entry name" value="Sig_transdc_resp-reg_receiver"/>
</dbReference>
<dbReference type="NCBIfam" id="NF010684">
    <property type="entry name" value="PRK14084.1"/>
    <property type="match status" value="1"/>
</dbReference>
<dbReference type="PANTHER" id="PTHR37299:SF1">
    <property type="entry name" value="STAGE 0 SPORULATION PROTEIN A HOMOLOG"/>
    <property type="match status" value="1"/>
</dbReference>
<dbReference type="PANTHER" id="PTHR37299">
    <property type="entry name" value="TRANSCRIPTIONAL REGULATOR-RELATED"/>
    <property type="match status" value="1"/>
</dbReference>
<dbReference type="Pfam" id="PF04397">
    <property type="entry name" value="LytTR"/>
    <property type="match status" value="1"/>
</dbReference>
<dbReference type="Pfam" id="PF00072">
    <property type="entry name" value="Response_reg"/>
    <property type="match status" value="1"/>
</dbReference>
<dbReference type="SMART" id="SM00850">
    <property type="entry name" value="LytTR"/>
    <property type="match status" value="1"/>
</dbReference>
<dbReference type="SMART" id="SM00448">
    <property type="entry name" value="REC"/>
    <property type="match status" value="1"/>
</dbReference>
<dbReference type="SUPFAM" id="SSF52172">
    <property type="entry name" value="CheY-like"/>
    <property type="match status" value="1"/>
</dbReference>
<dbReference type="PROSITE" id="PS50930">
    <property type="entry name" value="HTH_LYTTR"/>
    <property type="match status" value="1"/>
</dbReference>
<dbReference type="PROSITE" id="PS50110">
    <property type="entry name" value="RESPONSE_REGULATORY"/>
    <property type="match status" value="1"/>
</dbReference>
<reference key="1">
    <citation type="journal article" date="2005" name="Proc. Natl. Acad. Sci. U.S.A.">
        <title>Whole genome sequence of Staphylococcus saprophyticus reveals the pathogenesis of uncomplicated urinary tract infection.</title>
        <authorList>
            <person name="Kuroda M."/>
            <person name="Yamashita A."/>
            <person name="Hirakawa H."/>
            <person name="Kumano M."/>
            <person name="Morikawa K."/>
            <person name="Higashide M."/>
            <person name="Maruyama A."/>
            <person name="Inose Y."/>
            <person name="Matoba K."/>
            <person name="Toh H."/>
            <person name="Kuhara S."/>
            <person name="Hattori M."/>
            <person name="Ohta T."/>
        </authorList>
    </citation>
    <scope>NUCLEOTIDE SEQUENCE [LARGE SCALE GENOMIC DNA]</scope>
    <source>
        <strain>ATCC 15305 / DSM 20229 / NCIMB 8711 / NCTC 7292 / S-41</strain>
    </source>
</reference>
<feature type="chain" id="PRO_0000291855" description="Sensory transduction protein LytR">
    <location>
        <begin position="1"/>
        <end position="254"/>
    </location>
</feature>
<feature type="domain" description="Response regulatory" evidence="3">
    <location>
        <begin position="2"/>
        <end position="116"/>
    </location>
</feature>
<feature type="domain" description="HTH LytTR-type" evidence="2">
    <location>
        <begin position="149"/>
        <end position="253"/>
    </location>
</feature>
<feature type="region of interest" description="Disordered" evidence="4">
    <location>
        <begin position="120"/>
        <end position="143"/>
    </location>
</feature>
<feature type="compositionally biased region" description="Polar residues" evidence="4">
    <location>
        <begin position="129"/>
        <end position="138"/>
    </location>
</feature>
<feature type="modified residue" description="4-aspartylphosphate" evidence="3">
    <location>
        <position position="53"/>
    </location>
</feature>
<sequence length="254" mass="29581">MRAIIVDDEPLARNELHYLLNQINHFEKIDKAENVSETLELLLYDDYDVIFLDINLMDESGLDLANKIKKMKHAPFIIFATAHDTFAVKAFELDAIDYILKPFEQQRIAQAVHKVEQALGQTTEHHSDSYTTASMDTQNNEKTKTSKVLPIEVNERIHIINLDDIIAVSVNNGITTINTTLDDFETSEPLSHYEKKIETQNFMRIHRATLINKSHIQTIEHWFNYTYQLTMTNQLRFQVSRSYMKTFKQMMGLN</sequence>
<accession>Q4A010</accession>
<comment type="function">
    <text evidence="1">Member of the two-component regulatory system LytR/LytS that probably regulates genes involved in cell wall metabolism.</text>
</comment>
<comment type="subcellular location">
    <subcellularLocation>
        <location evidence="1">Cytoplasm</location>
    </subcellularLocation>
</comment>
<comment type="PTM">
    <text evidence="1">Phosphorylated by LytS.</text>
</comment>
<protein>
    <recommendedName>
        <fullName>Sensory transduction protein LytR</fullName>
    </recommendedName>
</protein>
<evidence type="ECO:0000250" key="1"/>
<evidence type="ECO:0000255" key="2">
    <source>
        <dbReference type="PROSITE-ProRule" id="PRU00112"/>
    </source>
</evidence>
<evidence type="ECO:0000255" key="3">
    <source>
        <dbReference type="PROSITE-ProRule" id="PRU00169"/>
    </source>
</evidence>
<evidence type="ECO:0000256" key="4">
    <source>
        <dbReference type="SAM" id="MobiDB-lite"/>
    </source>
</evidence>
<name>LYTR_STAS1</name>